<name>HEM1_STRCO</name>
<proteinExistence type="inferred from homology"/>
<dbReference type="EC" id="1.2.1.70" evidence="1"/>
<dbReference type="EMBL" id="AL939116">
    <property type="protein sequence ID" value="CAB45353.1"/>
    <property type="molecule type" value="Genomic_DNA"/>
</dbReference>
<dbReference type="PIR" id="T36267">
    <property type="entry name" value="T36267"/>
</dbReference>
<dbReference type="RefSeq" id="NP_627529.1">
    <property type="nucleotide sequence ID" value="NC_003888.3"/>
</dbReference>
<dbReference type="RefSeq" id="WP_011028907.1">
    <property type="nucleotide sequence ID" value="NZ_VNID01000025.1"/>
</dbReference>
<dbReference type="SMR" id="Q9WX15"/>
<dbReference type="FunCoup" id="Q9WX15">
    <property type="interactions" value="159"/>
</dbReference>
<dbReference type="STRING" id="100226.gene:17760938"/>
<dbReference type="PaxDb" id="100226-SCO3319"/>
<dbReference type="KEGG" id="sco:SCO3319"/>
<dbReference type="PATRIC" id="fig|100226.15.peg.3379"/>
<dbReference type="eggNOG" id="COG0373">
    <property type="taxonomic scope" value="Bacteria"/>
</dbReference>
<dbReference type="HOGENOM" id="CLU_035113_4_0_11"/>
<dbReference type="InParanoid" id="Q9WX15"/>
<dbReference type="OrthoDB" id="110209at2"/>
<dbReference type="PhylomeDB" id="Q9WX15"/>
<dbReference type="UniPathway" id="UPA00251">
    <property type="reaction ID" value="UER00316"/>
</dbReference>
<dbReference type="Proteomes" id="UP000001973">
    <property type="component" value="Chromosome"/>
</dbReference>
<dbReference type="GO" id="GO:0008883">
    <property type="term" value="F:glutamyl-tRNA reductase activity"/>
    <property type="evidence" value="ECO:0000318"/>
    <property type="project" value="GO_Central"/>
</dbReference>
<dbReference type="GO" id="GO:0050661">
    <property type="term" value="F:NADP binding"/>
    <property type="evidence" value="ECO:0007669"/>
    <property type="project" value="InterPro"/>
</dbReference>
<dbReference type="GO" id="GO:0019353">
    <property type="term" value="P:protoporphyrinogen IX biosynthetic process from glutamate"/>
    <property type="evidence" value="ECO:0000318"/>
    <property type="project" value="GO_Central"/>
</dbReference>
<dbReference type="CDD" id="cd05213">
    <property type="entry name" value="NAD_bind_Glutamyl_tRNA_reduct"/>
    <property type="match status" value="1"/>
</dbReference>
<dbReference type="FunFam" id="3.30.460.30:FF:000001">
    <property type="entry name" value="Glutamyl-tRNA reductase"/>
    <property type="match status" value="1"/>
</dbReference>
<dbReference type="FunFam" id="3.40.50.720:FF:001875">
    <property type="entry name" value="Shikimate dehydrogenase (NADP(+))"/>
    <property type="match status" value="1"/>
</dbReference>
<dbReference type="Gene3D" id="3.30.460.30">
    <property type="entry name" value="Glutamyl-tRNA reductase, N-terminal domain"/>
    <property type="match status" value="1"/>
</dbReference>
<dbReference type="Gene3D" id="3.40.50.720">
    <property type="entry name" value="NAD(P)-binding Rossmann-like Domain"/>
    <property type="match status" value="2"/>
</dbReference>
<dbReference type="HAMAP" id="MF_00087">
    <property type="entry name" value="Glu_tRNA_reductase"/>
    <property type="match status" value="1"/>
</dbReference>
<dbReference type="InterPro" id="IPR000343">
    <property type="entry name" value="4pyrrol_synth_GluRdtase"/>
</dbReference>
<dbReference type="InterPro" id="IPR015896">
    <property type="entry name" value="4pyrrol_synth_GluRdtase_dimer"/>
</dbReference>
<dbReference type="InterPro" id="IPR015895">
    <property type="entry name" value="4pyrrol_synth_GluRdtase_N"/>
</dbReference>
<dbReference type="InterPro" id="IPR018214">
    <property type="entry name" value="GluRdtase_CS"/>
</dbReference>
<dbReference type="InterPro" id="IPR036453">
    <property type="entry name" value="GluRdtase_dimer_dom_sf"/>
</dbReference>
<dbReference type="InterPro" id="IPR036343">
    <property type="entry name" value="GluRdtase_N_sf"/>
</dbReference>
<dbReference type="InterPro" id="IPR036291">
    <property type="entry name" value="NAD(P)-bd_dom_sf"/>
</dbReference>
<dbReference type="InterPro" id="IPR006151">
    <property type="entry name" value="Shikm_DH/Glu-tRNA_Rdtase"/>
</dbReference>
<dbReference type="NCBIfam" id="TIGR01035">
    <property type="entry name" value="hemA"/>
    <property type="match status" value="1"/>
</dbReference>
<dbReference type="NCBIfam" id="NF000744">
    <property type="entry name" value="PRK00045.1-3"/>
    <property type="match status" value="1"/>
</dbReference>
<dbReference type="PANTHER" id="PTHR43013">
    <property type="entry name" value="GLUTAMYL-TRNA REDUCTASE"/>
    <property type="match status" value="1"/>
</dbReference>
<dbReference type="PANTHER" id="PTHR43013:SF1">
    <property type="entry name" value="GLUTAMYL-TRNA REDUCTASE"/>
    <property type="match status" value="1"/>
</dbReference>
<dbReference type="Pfam" id="PF00745">
    <property type="entry name" value="GlutR_dimer"/>
    <property type="match status" value="1"/>
</dbReference>
<dbReference type="Pfam" id="PF05201">
    <property type="entry name" value="GlutR_N"/>
    <property type="match status" value="1"/>
</dbReference>
<dbReference type="Pfam" id="PF01488">
    <property type="entry name" value="Shikimate_DH"/>
    <property type="match status" value="1"/>
</dbReference>
<dbReference type="SUPFAM" id="SSF69742">
    <property type="entry name" value="Glutamyl tRNA-reductase catalytic, N-terminal domain"/>
    <property type="match status" value="1"/>
</dbReference>
<dbReference type="SUPFAM" id="SSF69075">
    <property type="entry name" value="Glutamyl tRNA-reductase dimerization domain"/>
    <property type="match status" value="1"/>
</dbReference>
<dbReference type="SUPFAM" id="SSF51735">
    <property type="entry name" value="NAD(P)-binding Rossmann-fold domains"/>
    <property type="match status" value="1"/>
</dbReference>
<dbReference type="PROSITE" id="PS00747">
    <property type="entry name" value="GLUTR"/>
    <property type="match status" value="1"/>
</dbReference>
<organism>
    <name type="scientific">Streptomyces coelicolor (strain ATCC BAA-471 / A3(2) / M145)</name>
    <dbReference type="NCBI Taxonomy" id="100226"/>
    <lineage>
        <taxon>Bacteria</taxon>
        <taxon>Bacillati</taxon>
        <taxon>Actinomycetota</taxon>
        <taxon>Actinomycetes</taxon>
        <taxon>Kitasatosporales</taxon>
        <taxon>Streptomycetaceae</taxon>
        <taxon>Streptomyces</taxon>
        <taxon>Streptomyces albidoflavus group</taxon>
    </lineage>
</organism>
<accession>Q9WX15</accession>
<gene>
    <name evidence="1" type="primary">hemA</name>
    <name type="ordered locus">SCO3319</name>
    <name type="ORF">SCE68.17c</name>
</gene>
<comment type="function">
    <text evidence="1">Catalyzes the NADPH-dependent reduction of glutamyl-tRNA(Glu) to glutamate 1-semialdehyde (GSA).</text>
</comment>
<comment type="catalytic activity">
    <reaction evidence="1">
        <text>(S)-4-amino-5-oxopentanoate + tRNA(Glu) + NADP(+) = L-glutamyl-tRNA(Glu) + NADPH + H(+)</text>
        <dbReference type="Rhea" id="RHEA:12344"/>
        <dbReference type="Rhea" id="RHEA-COMP:9663"/>
        <dbReference type="Rhea" id="RHEA-COMP:9680"/>
        <dbReference type="ChEBI" id="CHEBI:15378"/>
        <dbReference type="ChEBI" id="CHEBI:57501"/>
        <dbReference type="ChEBI" id="CHEBI:57783"/>
        <dbReference type="ChEBI" id="CHEBI:58349"/>
        <dbReference type="ChEBI" id="CHEBI:78442"/>
        <dbReference type="ChEBI" id="CHEBI:78520"/>
        <dbReference type="EC" id="1.2.1.70"/>
    </reaction>
</comment>
<comment type="pathway">
    <text evidence="1">Porphyrin-containing compound metabolism; protoporphyrin-IX biosynthesis; 5-aminolevulinate from L-glutamyl-tRNA(Glu): step 1/2.</text>
</comment>
<comment type="subunit">
    <text evidence="1">Homodimer.</text>
</comment>
<comment type="domain">
    <text evidence="1">Possesses an unusual extended V-shaped dimeric structure with each monomer consisting of three distinct domains arranged along a curved 'spinal' alpha-helix. The N-terminal catalytic domain specifically recognizes the glutamate moiety of the substrate. The second domain is the NADPH-binding domain, and the third C-terminal domain is responsible for dimerization.</text>
</comment>
<comment type="miscellaneous">
    <text evidence="1">During catalysis, the active site Cys acts as a nucleophile attacking the alpha-carbonyl group of tRNA-bound glutamate with the formation of a thioester intermediate between enzyme and glutamate, and the concomitant release of tRNA(Glu). The thioester intermediate is finally reduced by direct hydride transfer from NADPH, to form the product GSA.</text>
</comment>
<comment type="similarity">
    <text evidence="1">Belongs to the glutamyl-tRNA reductase family.</text>
</comment>
<evidence type="ECO:0000255" key="1">
    <source>
        <dbReference type="HAMAP-Rule" id="MF_00087"/>
    </source>
</evidence>
<keyword id="KW-0521">NADP</keyword>
<keyword id="KW-0560">Oxidoreductase</keyword>
<keyword id="KW-0627">Porphyrin biosynthesis</keyword>
<keyword id="KW-1185">Reference proteome</keyword>
<sequence length="581" mass="60562">MSLLVVGLSHRSAPVSVLERASLNADAQLKLLQDTVAAEPAAEAAVLATCNRIELYADVDKFHAGVAELSTLLAQHSGVGLEELTPYLYVHYEDRAVHHLFSVACGLDSMVVGEGQILGQIKDSLARAQDLHTAGRLLNDLFQQALRVGKRAHSETGIDRAGQSLVTFGLEQLSAGADVEQWARGKKALVIGAGSMSSLAAATLARAGVAEIVVANRTFERAERLALLLEEQYGQRLSEGDDTDVLARAVPMDAVPGELTRADVAVSCTGATGLVLTADSVAATVEGRTGAPAVEDTAVQETAVREAGETPLPGAGSAADENCPLDLSSVSSVPSGFSVMGEAAVAGMDAATLEQHGAWAAGGTAVDRTREAGRSGPEADAELIGALAATATRVGRIPERRRPEPVAEAPRPQPVLFLLDLAMPRDVDAAVHRLAGVRLVDIESLADASADAPMAADVDMVRRIVADEVAAFGAAQRAAHITPTVVALRSMAADVVAGEIARLEGRLPGLDDKHRAEITQTVKRVVDKLLHAPTVRVKQLAAEPGGAGYADALRTLFDLDQETVASVSRAENSTEKNRGPA</sequence>
<feature type="chain" id="PRO_0000114076" description="Glutamyl-tRNA reductase">
    <location>
        <begin position="1"/>
        <end position="581"/>
    </location>
</feature>
<feature type="region of interest" description="Insert">
    <location>
        <begin position="292"/>
        <end position="416"/>
    </location>
</feature>
<feature type="active site" description="Nucleophile" evidence="1">
    <location>
        <position position="50"/>
    </location>
</feature>
<feature type="binding site" evidence="1">
    <location>
        <begin position="49"/>
        <end position="52"/>
    </location>
    <ligand>
        <name>substrate</name>
    </ligand>
</feature>
<feature type="binding site" evidence="1">
    <location>
        <position position="109"/>
    </location>
    <ligand>
        <name>substrate</name>
    </ligand>
</feature>
<feature type="binding site" evidence="1">
    <location>
        <begin position="114"/>
        <end position="116"/>
    </location>
    <ligand>
        <name>substrate</name>
    </ligand>
</feature>
<feature type="binding site" evidence="1">
    <location>
        <position position="120"/>
    </location>
    <ligand>
        <name>substrate</name>
    </ligand>
</feature>
<feature type="binding site" evidence="1">
    <location>
        <begin position="192"/>
        <end position="197"/>
    </location>
    <ligand>
        <name>NADP(+)</name>
        <dbReference type="ChEBI" id="CHEBI:58349"/>
    </ligand>
</feature>
<feature type="site" description="Important for activity" evidence="1">
    <location>
        <position position="99"/>
    </location>
</feature>
<reference key="1">
    <citation type="journal article" date="2002" name="Nature">
        <title>Complete genome sequence of the model actinomycete Streptomyces coelicolor A3(2).</title>
        <authorList>
            <person name="Bentley S.D."/>
            <person name="Chater K.F."/>
            <person name="Cerdeno-Tarraga A.-M."/>
            <person name="Challis G.L."/>
            <person name="Thomson N.R."/>
            <person name="James K.D."/>
            <person name="Harris D.E."/>
            <person name="Quail M.A."/>
            <person name="Kieser H."/>
            <person name="Harper D."/>
            <person name="Bateman A."/>
            <person name="Brown S."/>
            <person name="Chandra G."/>
            <person name="Chen C.W."/>
            <person name="Collins M."/>
            <person name="Cronin A."/>
            <person name="Fraser A."/>
            <person name="Goble A."/>
            <person name="Hidalgo J."/>
            <person name="Hornsby T."/>
            <person name="Howarth S."/>
            <person name="Huang C.-H."/>
            <person name="Kieser T."/>
            <person name="Larke L."/>
            <person name="Murphy L.D."/>
            <person name="Oliver K."/>
            <person name="O'Neil S."/>
            <person name="Rabbinowitsch E."/>
            <person name="Rajandream M.A."/>
            <person name="Rutherford K.M."/>
            <person name="Rutter S."/>
            <person name="Seeger K."/>
            <person name="Saunders D."/>
            <person name="Sharp S."/>
            <person name="Squares R."/>
            <person name="Squares S."/>
            <person name="Taylor K."/>
            <person name="Warren T."/>
            <person name="Wietzorrek A."/>
            <person name="Woodward J.R."/>
            <person name="Barrell B.G."/>
            <person name="Parkhill J."/>
            <person name="Hopwood D.A."/>
        </authorList>
    </citation>
    <scope>NUCLEOTIDE SEQUENCE [LARGE SCALE GENOMIC DNA]</scope>
    <source>
        <strain>ATCC BAA-471 / A3(2) / M145</strain>
    </source>
</reference>
<protein>
    <recommendedName>
        <fullName evidence="1">Glutamyl-tRNA reductase</fullName>
        <shortName evidence="1">GluTR</shortName>
        <ecNumber evidence="1">1.2.1.70</ecNumber>
    </recommendedName>
</protein>